<organism>
    <name type="scientific">Lobatophasma redelinghuysense</name>
    <name type="common">Gladiator</name>
    <name type="synonym">Heel-walker</name>
    <dbReference type="NCBI Taxonomy" id="253128"/>
    <lineage>
        <taxon>Eukaryota</taxon>
        <taxon>Metazoa</taxon>
        <taxon>Ecdysozoa</taxon>
        <taxon>Arthropoda</taxon>
        <taxon>Hexapoda</taxon>
        <taxon>Insecta</taxon>
        <taxon>Pterygota</taxon>
        <taxon>Neoptera</taxon>
        <taxon>Polyneoptera</taxon>
        <taxon>Mantophasmatodea</taxon>
        <taxon>Austrophasmatidae</taxon>
        <taxon>Lobatophasma</taxon>
    </lineage>
</organism>
<reference evidence="5" key="1">
    <citation type="journal article" date="2012" name="Syst. Biol.">
        <title>Peptidomics-based phylogeny and biogeography of Mantophasmatodea (Hexapoda).</title>
        <authorList>
            <person name="Predel R."/>
            <person name="Neupert S."/>
            <person name="Huetteroth W."/>
            <person name="Kahnt J."/>
            <person name="Waidelich D."/>
            <person name="Roth S."/>
        </authorList>
    </citation>
    <scope>PROTEIN SEQUENCE</scope>
    <scope>AMIDATION AT LEU-8</scope>
    <source>
        <tissue evidence="3">Corpora cardiaca</tissue>
    </source>
</reference>
<dbReference type="GO" id="GO:0005576">
    <property type="term" value="C:extracellular region"/>
    <property type="evidence" value="ECO:0007669"/>
    <property type="project" value="UniProtKB-SubCell"/>
</dbReference>
<dbReference type="GO" id="GO:0007218">
    <property type="term" value="P:neuropeptide signaling pathway"/>
    <property type="evidence" value="ECO:0007669"/>
    <property type="project" value="UniProtKB-KW"/>
</dbReference>
<dbReference type="PROSITE" id="PS00539">
    <property type="entry name" value="PYROKININ"/>
    <property type="match status" value="1"/>
</dbReference>
<keyword id="KW-0027">Amidation</keyword>
<keyword id="KW-0903">Direct protein sequencing</keyword>
<keyword id="KW-0527">Neuropeptide</keyword>
<keyword id="KW-0964">Secreted</keyword>
<evidence type="ECO:0000250" key="1">
    <source>
        <dbReference type="UniProtKB" id="P82619"/>
    </source>
</evidence>
<evidence type="ECO:0000255" key="2"/>
<evidence type="ECO:0000269" key="3">
    <source>
    </source>
</evidence>
<evidence type="ECO:0000303" key="4">
    <source>
    </source>
</evidence>
<evidence type="ECO:0000305" key="5"/>
<evidence type="ECO:0000305" key="6">
    <source>
    </source>
</evidence>
<name>PPK3_LOBRE</name>
<protein>
    <recommendedName>
        <fullName evidence="4">Pyrokinin-3</fullName>
        <shortName evidence="4">PK-3</shortName>
    </recommendedName>
    <alternativeName>
        <fullName evidence="1">FXPRL-amide</fullName>
    </alternativeName>
</protein>
<feature type="peptide" id="PRO_0000421597" description="Pyrokinin-3" evidence="3">
    <location>
        <begin position="1"/>
        <end position="8"/>
    </location>
</feature>
<feature type="modified residue" description="Leucine amide" evidence="3">
    <location>
        <position position="8"/>
    </location>
</feature>
<proteinExistence type="evidence at protein level"/>
<comment type="function">
    <text evidence="1">Myoactive.</text>
</comment>
<comment type="subcellular location">
    <subcellularLocation>
        <location evidence="6">Secreted</location>
    </subcellularLocation>
</comment>
<comment type="similarity">
    <text evidence="2">Belongs to the pyrokinin family.</text>
</comment>
<sequence>DPPFSPRL</sequence>
<accession>B3A093</accession>